<proteinExistence type="inferred from homology"/>
<sequence>MEIRIVDHPLAASRLTIMRDKRTNNAGFRAALADLGAMLVYEASRDLAIEQFPVSTPVADTQGTRLQDPPIIVPIIRAGLGMVDPALSMIPDAQVGFIGMARDEATHQPVPYLEALPDDLSGRTVFCVDPMLATGGSLLHAIKLLADRGATDITAICMVSAQEGVDALAESGLPCRLVTATIDPELNDDAYIVPGLGDAGDRLYGPRNIDL</sequence>
<name>UPP_CORDI</name>
<accession>Q6NIX4</accession>
<keyword id="KW-0021">Allosteric enzyme</keyword>
<keyword id="KW-0328">Glycosyltransferase</keyword>
<keyword id="KW-0342">GTP-binding</keyword>
<keyword id="KW-0460">Magnesium</keyword>
<keyword id="KW-0547">Nucleotide-binding</keyword>
<keyword id="KW-1185">Reference proteome</keyword>
<keyword id="KW-0808">Transferase</keyword>
<gene>
    <name evidence="1" type="primary">upp</name>
    <name type="ordered locus">DIP0642</name>
</gene>
<feature type="chain" id="PRO_0000120818" description="Uracil phosphoribosyltransferase">
    <location>
        <begin position="1"/>
        <end position="211"/>
    </location>
</feature>
<feature type="binding site" evidence="1">
    <location>
        <position position="77"/>
    </location>
    <ligand>
        <name>5-phospho-alpha-D-ribose 1-diphosphate</name>
        <dbReference type="ChEBI" id="CHEBI:58017"/>
    </ligand>
</feature>
<feature type="binding site" evidence="1">
    <location>
        <position position="102"/>
    </location>
    <ligand>
        <name>5-phospho-alpha-D-ribose 1-diphosphate</name>
        <dbReference type="ChEBI" id="CHEBI:58017"/>
    </ligand>
</feature>
<feature type="binding site" evidence="1">
    <location>
        <begin position="129"/>
        <end position="137"/>
    </location>
    <ligand>
        <name>5-phospho-alpha-D-ribose 1-diphosphate</name>
        <dbReference type="ChEBI" id="CHEBI:58017"/>
    </ligand>
</feature>
<feature type="binding site" evidence="1">
    <location>
        <position position="192"/>
    </location>
    <ligand>
        <name>uracil</name>
        <dbReference type="ChEBI" id="CHEBI:17568"/>
    </ligand>
</feature>
<feature type="binding site" evidence="1">
    <location>
        <begin position="197"/>
        <end position="199"/>
    </location>
    <ligand>
        <name>uracil</name>
        <dbReference type="ChEBI" id="CHEBI:17568"/>
    </ligand>
</feature>
<feature type="binding site" evidence="1">
    <location>
        <position position="198"/>
    </location>
    <ligand>
        <name>5-phospho-alpha-D-ribose 1-diphosphate</name>
        <dbReference type="ChEBI" id="CHEBI:58017"/>
    </ligand>
</feature>
<organism>
    <name type="scientific">Corynebacterium diphtheriae (strain ATCC 700971 / NCTC 13129 / Biotype gravis)</name>
    <dbReference type="NCBI Taxonomy" id="257309"/>
    <lineage>
        <taxon>Bacteria</taxon>
        <taxon>Bacillati</taxon>
        <taxon>Actinomycetota</taxon>
        <taxon>Actinomycetes</taxon>
        <taxon>Mycobacteriales</taxon>
        <taxon>Corynebacteriaceae</taxon>
        <taxon>Corynebacterium</taxon>
    </lineage>
</organism>
<evidence type="ECO:0000255" key="1">
    <source>
        <dbReference type="HAMAP-Rule" id="MF_01218"/>
    </source>
</evidence>
<comment type="function">
    <text evidence="1">Catalyzes the conversion of uracil and 5-phospho-alpha-D-ribose 1-diphosphate (PRPP) to UMP and diphosphate.</text>
</comment>
<comment type="catalytic activity">
    <reaction evidence="1">
        <text>UMP + diphosphate = 5-phospho-alpha-D-ribose 1-diphosphate + uracil</text>
        <dbReference type="Rhea" id="RHEA:13017"/>
        <dbReference type="ChEBI" id="CHEBI:17568"/>
        <dbReference type="ChEBI" id="CHEBI:33019"/>
        <dbReference type="ChEBI" id="CHEBI:57865"/>
        <dbReference type="ChEBI" id="CHEBI:58017"/>
        <dbReference type="EC" id="2.4.2.9"/>
    </reaction>
</comment>
<comment type="cofactor">
    <cofactor evidence="1">
        <name>Mg(2+)</name>
        <dbReference type="ChEBI" id="CHEBI:18420"/>
    </cofactor>
    <text evidence="1">Binds 1 Mg(2+) ion per subunit. The magnesium is bound as Mg-PRPP.</text>
</comment>
<comment type="activity regulation">
    <text evidence="1">Allosterically activated by GTP.</text>
</comment>
<comment type="pathway">
    <text evidence="1">Pyrimidine metabolism; UMP biosynthesis via salvage pathway; UMP from uracil: step 1/1.</text>
</comment>
<comment type="similarity">
    <text evidence="1">Belongs to the UPRTase family.</text>
</comment>
<dbReference type="EC" id="2.4.2.9" evidence="1"/>
<dbReference type="EMBL" id="BX248355">
    <property type="protein sequence ID" value="CAE49159.1"/>
    <property type="molecule type" value="Genomic_DNA"/>
</dbReference>
<dbReference type="RefSeq" id="WP_004567014.1">
    <property type="nucleotide sequence ID" value="NC_002935.2"/>
</dbReference>
<dbReference type="SMR" id="Q6NIX4"/>
<dbReference type="STRING" id="257309.DIP0642"/>
<dbReference type="GeneID" id="29422166"/>
<dbReference type="KEGG" id="cdi:DIP0642"/>
<dbReference type="HOGENOM" id="CLU_067096_2_3_11"/>
<dbReference type="UniPathway" id="UPA00574">
    <property type="reaction ID" value="UER00636"/>
</dbReference>
<dbReference type="Proteomes" id="UP000002198">
    <property type="component" value="Chromosome"/>
</dbReference>
<dbReference type="GO" id="GO:0005525">
    <property type="term" value="F:GTP binding"/>
    <property type="evidence" value="ECO:0007669"/>
    <property type="project" value="UniProtKB-KW"/>
</dbReference>
<dbReference type="GO" id="GO:0000287">
    <property type="term" value="F:magnesium ion binding"/>
    <property type="evidence" value="ECO:0007669"/>
    <property type="project" value="UniProtKB-UniRule"/>
</dbReference>
<dbReference type="GO" id="GO:0004845">
    <property type="term" value="F:uracil phosphoribosyltransferase activity"/>
    <property type="evidence" value="ECO:0007669"/>
    <property type="project" value="UniProtKB-UniRule"/>
</dbReference>
<dbReference type="GO" id="GO:0044206">
    <property type="term" value="P:UMP salvage"/>
    <property type="evidence" value="ECO:0007669"/>
    <property type="project" value="UniProtKB-UniRule"/>
</dbReference>
<dbReference type="GO" id="GO:0006223">
    <property type="term" value="P:uracil salvage"/>
    <property type="evidence" value="ECO:0007669"/>
    <property type="project" value="InterPro"/>
</dbReference>
<dbReference type="CDD" id="cd06223">
    <property type="entry name" value="PRTases_typeI"/>
    <property type="match status" value="1"/>
</dbReference>
<dbReference type="FunFam" id="3.40.50.2020:FF:000003">
    <property type="entry name" value="Uracil phosphoribosyltransferase"/>
    <property type="match status" value="1"/>
</dbReference>
<dbReference type="Gene3D" id="3.40.50.2020">
    <property type="match status" value="1"/>
</dbReference>
<dbReference type="HAMAP" id="MF_01218_B">
    <property type="entry name" value="Upp_B"/>
    <property type="match status" value="1"/>
</dbReference>
<dbReference type="InterPro" id="IPR000836">
    <property type="entry name" value="PRibTrfase_dom"/>
</dbReference>
<dbReference type="InterPro" id="IPR029057">
    <property type="entry name" value="PRTase-like"/>
</dbReference>
<dbReference type="InterPro" id="IPR034332">
    <property type="entry name" value="Upp_B"/>
</dbReference>
<dbReference type="InterPro" id="IPR050054">
    <property type="entry name" value="UPRTase/APRTase"/>
</dbReference>
<dbReference type="InterPro" id="IPR005765">
    <property type="entry name" value="Ura_phspho_trans"/>
</dbReference>
<dbReference type="NCBIfam" id="NF001097">
    <property type="entry name" value="PRK00129.1"/>
    <property type="match status" value="1"/>
</dbReference>
<dbReference type="NCBIfam" id="TIGR01091">
    <property type="entry name" value="upp"/>
    <property type="match status" value="1"/>
</dbReference>
<dbReference type="PANTHER" id="PTHR32315">
    <property type="entry name" value="ADENINE PHOSPHORIBOSYLTRANSFERASE"/>
    <property type="match status" value="1"/>
</dbReference>
<dbReference type="PANTHER" id="PTHR32315:SF4">
    <property type="entry name" value="URACIL PHOSPHORIBOSYLTRANSFERASE, CHLOROPLASTIC"/>
    <property type="match status" value="1"/>
</dbReference>
<dbReference type="Pfam" id="PF14681">
    <property type="entry name" value="UPRTase"/>
    <property type="match status" value="1"/>
</dbReference>
<dbReference type="SUPFAM" id="SSF53271">
    <property type="entry name" value="PRTase-like"/>
    <property type="match status" value="1"/>
</dbReference>
<protein>
    <recommendedName>
        <fullName evidence="1">Uracil phosphoribosyltransferase</fullName>
        <ecNumber evidence="1">2.4.2.9</ecNumber>
    </recommendedName>
    <alternativeName>
        <fullName evidence="1">UMP pyrophosphorylase</fullName>
    </alternativeName>
    <alternativeName>
        <fullName evidence="1">UPRTase</fullName>
    </alternativeName>
</protein>
<reference key="1">
    <citation type="journal article" date="2003" name="Nucleic Acids Res.">
        <title>The complete genome sequence and analysis of Corynebacterium diphtheriae NCTC13129.</title>
        <authorList>
            <person name="Cerdeno-Tarraga A.-M."/>
            <person name="Efstratiou A."/>
            <person name="Dover L.G."/>
            <person name="Holden M.T.G."/>
            <person name="Pallen M.J."/>
            <person name="Bentley S.D."/>
            <person name="Besra G.S."/>
            <person name="Churcher C.M."/>
            <person name="James K.D."/>
            <person name="De Zoysa A."/>
            <person name="Chillingworth T."/>
            <person name="Cronin A."/>
            <person name="Dowd L."/>
            <person name="Feltwell T."/>
            <person name="Hamlin N."/>
            <person name="Holroyd S."/>
            <person name="Jagels K."/>
            <person name="Moule S."/>
            <person name="Quail M.A."/>
            <person name="Rabbinowitsch E."/>
            <person name="Rutherford K.M."/>
            <person name="Thomson N.R."/>
            <person name="Unwin L."/>
            <person name="Whitehead S."/>
            <person name="Barrell B.G."/>
            <person name="Parkhill J."/>
        </authorList>
    </citation>
    <scope>NUCLEOTIDE SEQUENCE [LARGE SCALE GENOMIC DNA]</scope>
    <source>
        <strain>ATCC 700971 / NCTC 13129 / Biotype gravis</strain>
    </source>
</reference>